<organism>
    <name type="scientific">Neorickettsia sennetsu (strain ATCC VR-367 / Miyayama)</name>
    <name type="common">Ehrlichia sennetsu</name>
    <dbReference type="NCBI Taxonomy" id="222891"/>
    <lineage>
        <taxon>Bacteria</taxon>
        <taxon>Pseudomonadati</taxon>
        <taxon>Pseudomonadota</taxon>
        <taxon>Alphaproteobacteria</taxon>
        <taxon>Rickettsiales</taxon>
        <taxon>Anaplasmataceae</taxon>
        <taxon>Neorickettsia</taxon>
    </lineage>
</organism>
<gene>
    <name evidence="1" type="primary">rplE</name>
    <name type="ordered locus">NSE_0278</name>
</gene>
<comment type="function">
    <text evidence="1">This is one of the proteins that bind and probably mediate the attachment of the 5S RNA into the large ribosomal subunit, where it forms part of the central protuberance. In the 70S ribosome it contacts protein S13 of the 30S subunit (bridge B1b), connecting the 2 subunits; this bridge is implicated in subunit movement. Contacts the P site tRNA; the 5S rRNA and some of its associated proteins might help stabilize positioning of ribosome-bound tRNAs.</text>
</comment>
<comment type="subunit">
    <text evidence="1">Part of the 50S ribosomal subunit; part of the 5S rRNA/L5/L18/L25 subcomplex. Contacts the 5S rRNA and the P site tRNA. Forms a bridge to the 30S subunit in the 70S ribosome.</text>
</comment>
<comment type="similarity">
    <text evidence="1">Belongs to the universal ribosomal protein uL5 family.</text>
</comment>
<accession>Q2GEC7</accession>
<reference key="1">
    <citation type="journal article" date="2006" name="PLoS Genet.">
        <title>Comparative genomics of emerging human ehrlichiosis agents.</title>
        <authorList>
            <person name="Dunning Hotopp J.C."/>
            <person name="Lin M."/>
            <person name="Madupu R."/>
            <person name="Crabtree J."/>
            <person name="Angiuoli S.V."/>
            <person name="Eisen J.A."/>
            <person name="Seshadri R."/>
            <person name="Ren Q."/>
            <person name="Wu M."/>
            <person name="Utterback T.R."/>
            <person name="Smith S."/>
            <person name="Lewis M."/>
            <person name="Khouri H."/>
            <person name="Zhang C."/>
            <person name="Niu H."/>
            <person name="Lin Q."/>
            <person name="Ohashi N."/>
            <person name="Zhi N."/>
            <person name="Nelson W.C."/>
            <person name="Brinkac L.M."/>
            <person name="Dodson R.J."/>
            <person name="Rosovitz M.J."/>
            <person name="Sundaram J.P."/>
            <person name="Daugherty S.C."/>
            <person name="Davidsen T."/>
            <person name="Durkin A.S."/>
            <person name="Gwinn M.L."/>
            <person name="Haft D.H."/>
            <person name="Selengut J.D."/>
            <person name="Sullivan S.A."/>
            <person name="Zafar N."/>
            <person name="Zhou L."/>
            <person name="Benahmed F."/>
            <person name="Forberger H."/>
            <person name="Halpin R."/>
            <person name="Mulligan S."/>
            <person name="Robinson J."/>
            <person name="White O."/>
            <person name="Rikihisa Y."/>
            <person name="Tettelin H."/>
        </authorList>
    </citation>
    <scope>NUCLEOTIDE SEQUENCE [LARGE SCALE GENOMIC DNA]</scope>
    <source>
        <strain>ATCC VR-367 / Miyayama</strain>
    </source>
</reference>
<keyword id="KW-0687">Ribonucleoprotein</keyword>
<keyword id="KW-0689">Ribosomal protein</keyword>
<keyword id="KW-0694">RNA-binding</keyword>
<keyword id="KW-0699">rRNA-binding</keyword>
<keyword id="KW-0820">tRNA-binding</keyword>
<evidence type="ECO:0000255" key="1">
    <source>
        <dbReference type="HAMAP-Rule" id="MF_01333"/>
    </source>
</evidence>
<evidence type="ECO:0000305" key="2"/>
<protein>
    <recommendedName>
        <fullName evidence="1">Large ribosomal subunit protein uL5</fullName>
    </recommendedName>
    <alternativeName>
        <fullName evidence="2">50S ribosomal protein L5</fullName>
    </alternativeName>
</protein>
<name>RL5_NEOSM</name>
<sequence>MLESEYHKSALARVMKEVGVDSPVKAPRFEKVCLSVGLGGASSDSKLLASAVEDLSLIAGQKAVVTVAKKSISSFKLRKGFPVGCRVTLRKRRMFDFINRLLYMALPDQKDFKGFTMRNFDGHGNMAFGLTEHIVFPEVDFDKTYRIIGMNVVVVTTASTDQLARILLSCYGFPFRD</sequence>
<feature type="chain" id="PRO_0000243028" description="Large ribosomal subunit protein uL5">
    <location>
        <begin position="1"/>
        <end position="177"/>
    </location>
</feature>
<proteinExistence type="inferred from homology"/>
<dbReference type="EMBL" id="CP000237">
    <property type="protein sequence ID" value="ABD45857.1"/>
    <property type="molecule type" value="Genomic_DNA"/>
</dbReference>
<dbReference type="RefSeq" id="WP_011451675.1">
    <property type="nucleotide sequence ID" value="NC_007798.1"/>
</dbReference>
<dbReference type="SMR" id="Q2GEC7"/>
<dbReference type="STRING" id="222891.NSE_0278"/>
<dbReference type="KEGG" id="nse:NSE_0278"/>
<dbReference type="eggNOG" id="COG0094">
    <property type="taxonomic scope" value="Bacteria"/>
</dbReference>
<dbReference type="HOGENOM" id="CLU_061015_2_1_5"/>
<dbReference type="OrthoDB" id="9806626at2"/>
<dbReference type="Proteomes" id="UP000001942">
    <property type="component" value="Chromosome"/>
</dbReference>
<dbReference type="GO" id="GO:1990904">
    <property type="term" value="C:ribonucleoprotein complex"/>
    <property type="evidence" value="ECO:0007669"/>
    <property type="project" value="UniProtKB-KW"/>
</dbReference>
<dbReference type="GO" id="GO:0005840">
    <property type="term" value="C:ribosome"/>
    <property type="evidence" value="ECO:0007669"/>
    <property type="project" value="UniProtKB-KW"/>
</dbReference>
<dbReference type="GO" id="GO:0019843">
    <property type="term" value="F:rRNA binding"/>
    <property type="evidence" value="ECO:0007669"/>
    <property type="project" value="UniProtKB-UniRule"/>
</dbReference>
<dbReference type="GO" id="GO:0003735">
    <property type="term" value="F:structural constituent of ribosome"/>
    <property type="evidence" value="ECO:0007669"/>
    <property type="project" value="InterPro"/>
</dbReference>
<dbReference type="GO" id="GO:0000049">
    <property type="term" value="F:tRNA binding"/>
    <property type="evidence" value="ECO:0007669"/>
    <property type="project" value="UniProtKB-UniRule"/>
</dbReference>
<dbReference type="GO" id="GO:0006412">
    <property type="term" value="P:translation"/>
    <property type="evidence" value="ECO:0007669"/>
    <property type="project" value="UniProtKB-UniRule"/>
</dbReference>
<dbReference type="FunFam" id="3.30.1440.10:FF:000001">
    <property type="entry name" value="50S ribosomal protein L5"/>
    <property type="match status" value="1"/>
</dbReference>
<dbReference type="Gene3D" id="3.30.1440.10">
    <property type="match status" value="1"/>
</dbReference>
<dbReference type="HAMAP" id="MF_01333_B">
    <property type="entry name" value="Ribosomal_uL5_B"/>
    <property type="match status" value="1"/>
</dbReference>
<dbReference type="InterPro" id="IPR002132">
    <property type="entry name" value="Ribosomal_uL5"/>
</dbReference>
<dbReference type="InterPro" id="IPR020930">
    <property type="entry name" value="Ribosomal_uL5_bac-type"/>
</dbReference>
<dbReference type="InterPro" id="IPR031309">
    <property type="entry name" value="Ribosomal_uL5_C"/>
</dbReference>
<dbReference type="InterPro" id="IPR020929">
    <property type="entry name" value="Ribosomal_uL5_CS"/>
</dbReference>
<dbReference type="InterPro" id="IPR022803">
    <property type="entry name" value="Ribosomal_uL5_dom_sf"/>
</dbReference>
<dbReference type="InterPro" id="IPR031310">
    <property type="entry name" value="Ribosomal_uL5_N"/>
</dbReference>
<dbReference type="NCBIfam" id="NF000585">
    <property type="entry name" value="PRK00010.1"/>
    <property type="match status" value="1"/>
</dbReference>
<dbReference type="PANTHER" id="PTHR11994">
    <property type="entry name" value="60S RIBOSOMAL PROTEIN L11-RELATED"/>
    <property type="match status" value="1"/>
</dbReference>
<dbReference type="Pfam" id="PF00281">
    <property type="entry name" value="Ribosomal_L5"/>
    <property type="match status" value="1"/>
</dbReference>
<dbReference type="Pfam" id="PF00673">
    <property type="entry name" value="Ribosomal_L5_C"/>
    <property type="match status" value="1"/>
</dbReference>
<dbReference type="PIRSF" id="PIRSF002161">
    <property type="entry name" value="Ribosomal_L5"/>
    <property type="match status" value="1"/>
</dbReference>
<dbReference type="SUPFAM" id="SSF55282">
    <property type="entry name" value="RL5-like"/>
    <property type="match status" value="1"/>
</dbReference>
<dbReference type="PROSITE" id="PS00358">
    <property type="entry name" value="RIBOSOMAL_L5"/>
    <property type="match status" value="1"/>
</dbReference>